<organism>
    <name type="scientific">Rattus norvegicus</name>
    <name type="common">Rat</name>
    <dbReference type="NCBI Taxonomy" id="10116"/>
    <lineage>
        <taxon>Eukaryota</taxon>
        <taxon>Metazoa</taxon>
        <taxon>Chordata</taxon>
        <taxon>Craniata</taxon>
        <taxon>Vertebrata</taxon>
        <taxon>Euteleostomi</taxon>
        <taxon>Mammalia</taxon>
        <taxon>Eutheria</taxon>
        <taxon>Euarchontoglires</taxon>
        <taxon>Glires</taxon>
        <taxon>Rodentia</taxon>
        <taxon>Myomorpha</taxon>
        <taxon>Muroidea</taxon>
        <taxon>Muridae</taxon>
        <taxon>Murinae</taxon>
        <taxon>Rattus</taxon>
    </lineage>
</organism>
<evidence type="ECO:0000250" key="1"/>
<evidence type="ECO:0000250" key="2">
    <source>
        <dbReference type="UniProtKB" id="P09769"/>
    </source>
</evidence>
<evidence type="ECO:0000250" key="3">
    <source>
        <dbReference type="UniProtKB" id="P14234"/>
    </source>
</evidence>
<evidence type="ECO:0000255" key="4">
    <source>
        <dbReference type="PROSITE-ProRule" id="PRU00159"/>
    </source>
</evidence>
<evidence type="ECO:0000255" key="5">
    <source>
        <dbReference type="PROSITE-ProRule" id="PRU00191"/>
    </source>
</evidence>
<evidence type="ECO:0000255" key="6">
    <source>
        <dbReference type="PROSITE-ProRule" id="PRU00192"/>
    </source>
</evidence>
<evidence type="ECO:0000255" key="7">
    <source>
        <dbReference type="PROSITE-ProRule" id="PRU10028"/>
    </source>
</evidence>
<evidence type="ECO:0000256" key="8">
    <source>
        <dbReference type="SAM" id="MobiDB-lite"/>
    </source>
</evidence>
<evidence type="ECO:0000269" key="9">
    <source>
    </source>
</evidence>
<evidence type="ECO:0000269" key="10">
    <source>
    </source>
</evidence>
<evidence type="ECO:0000269" key="11">
    <source>
    </source>
</evidence>
<evidence type="ECO:0000269" key="12">
    <source>
    </source>
</evidence>
<evidence type="ECO:0000269" key="13">
    <source>
    </source>
</evidence>
<evidence type="ECO:0000269" key="14">
    <source>
    </source>
</evidence>
<evidence type="ECO:0000269" key="15">
    <source>
    </source>
</evidence>
<evidence type="ECO:0000305" key="16"/>
<evidence type="ECO:0007744" key="17">
    <source>
    </source>
</evidence>
<feature type="initiator methionine" description="Removed">
    <location>
        <position position="1"/>
    </location>
</feature>
<feature type="chain" id="PRO_0000413581" description="Tyrosine-protein kinase Fgr">
    <location>
        <begin position="2"/>
        <end position="517"/>
    </location>
</feature>
<feature type="domain" description="SH3" evidence="6">
    <location>
        <begin position="65"/>
        <end position="126"/>
    </location>
</feature>
<feature type="domain" description="SH2" evidence="5">
    <location>
        <begin position="132"/>
        <end position="229"/>
    </location>
</feature>
<feature type="domain" description="Protein kinase" evidence="4">
    <location>
        <begin position="251"/>
        <end position="504"/>
    </location>
</feature>
<feature type="region of interest" description="Disordered" evidence="8">
    <location>
        <begin position="17"/>
        <end position="46"/>
    </location>
</feature>
<feature type="compositionally biased region" description="Basic and acidic residues" evidence="8">
    <location>
        <begin position="17"/>
        <end position="33"/>
    </location>
</feature>
<feature type="active site" description="Proton acceptor" evidence="4 7">
    <location>
        <position position="370"/>
    </location>
</feature>
<feature type="binding site" evidence="4">
    <location>
        <begin position="257"/>
        <end position="265"/>
    </location>
    <ligand>
        <name>ATP</name>
        <dbReference type="ChEBI" id="CHEBI:30616"/>
    </ligand>
</feature>
<feature type="binding site" evidence="4">
    <location>
        <position position="279"/>
    </location>
    <ligand>
        <name>ATP</name>
        <dbReference type="ChEBI" id="CHEBI:30616"/>
    </ligand>
</feature>
<feature type="modified residue" description="Phosphotyrosine" evidence="2">
    <location>
        <position position="32"/>
    </location>
</feature>
<feature type="modified residue" description="Phosphoserine" evidence="17">
    <location>
        <position position="50"/>
    </location>
</feature>
<feature type="modified residue" description="Phosphotyrosine" evidence="3">
    <location>
        <position position="196"/>
    </location>
</feature>
<feature type="modified residue" description="Phosphoserine" evidence="3">
    <location>
        <position position="206"/>
    </location>
</feature>
<feature type="modified residue" description="Phosphotyrosine; by autocatalysis" evidence="13">
    <location>
        <position position="400"/>
    </location>
</feature>
<feature type="modified residue" description="Phosphotyrosine; by SRC" evidence="13">
    <location>
        <position position="511"/>
    </location>
</feature>
<feature type="lipid moiety-binding region" description="N-myristoyl glycine" evidence="1">
    <location>
        <position position="2"/>
    </location>
</feature>
<feature type="lipid moiety-binding region" description="S-palmitoyl cysteine" evidence="1">
    <location>
        <position position="3"/>
    </location>
</feature>
<feature type="lipid moiety-binding region" description="S-palmitoyl cysteine" evidence="1">
    <location>
        <position position="6"/>
    </location>
</feature>
<feature type="sequence conflict" description="In Ref. 1; CAA40337." evidence="16" ref="1">
    <original>V</original>
    <variation>A</variation>
    <location>
        <position position="313"/>
    </location>
</feature>
<keyword id="KW-0067">ATP-binding</keyword>
<keyword id="KW-1003">Cell membrane</keyword>
<keyword id="KW-0966">Cell projection</keyword>
<keyword id="KW-0963">Cytoplasm</keyword>
<keyword id="KW-0206">Cytoskeleton</keyword>
<keyword id="KW-0903">Direct protein sequencing</keyword>
<keyword id="KW-0391">Immunity</keyword>
<keyword id="KW-0399">Innate immunity</keyword>
<keyword id="KW-0418">Kinase</keyword>
<keyword id="KW-0449">Lipoprotein</keyword>
<keyword id="KW-0472">Membrane</keyword>
<keyword id="KW-0496">Mitochondrion</keyword>
<keyword id="KW-0999">Mitochondrion inner membrane</keyword>
<keyword id="KW-0519">Myristate</keyword>
<keyword id="KW-0547">Nucleotide-binding</keyword>
<keyword id="KW-0564">Palmitate</keyword>
<keyword id="KW-0597">Phosphoprotein</keyword>
<keyword id="KW-0656">Proto-oncogene</keyword>
<keyword id="KW-1185">Reference proteome</keyword>
<keyword id="KW-0728">SH3 domain</keyword>
<keyword id="KW-0808">Transferase</keyword>
<keyword id="KW-0829">Tyrosine-protein kinase</keyword>
<keyword id="KW-0832">Ubl conjugation</keyword>
<reference key="1">
    <citation type="submission" date="2005-04" db="EMBL/GenBank/DDBJ databases">
        <title>Nucleotide and deduced amino acid sequence of rat FGR.</title>
        <authorList>
            <person name="Yue C.C."/>
            <person name="Labash J.D."/>
            <person name="Jaye M."/>
        </authorList>
    </citation>
    <scope>NUCLEOTIDE SEQUENCE [MRNA]</scope>
    <source>
        <strain>Fischer 344</strain>
        <tissue>Leukemia</tissue>
    </source>
</reference>
<reference key="2">
    <citation type="submission" date="2005-07" db="EMBL/GenBank/DDBJ databases">
        <authorList>
            <person name="Mural R.J."/>
            <person name="Adams M.D."/>
            <person name="Myers E.W."/>
            <person name="Smith H.O."/>
            <person name="Venter J.C."/>
        </authorList>
    </citation>
    <scope>NUCLEOTIDE SEQUENCE [LARGE SCALE GENOMIC DNA]</scope>
    <source>
        <strain>Brown Norway</strain>
    </source>
</reference>
<reference key="3">
    <citation type="journal article" date="2004" name="Genome Res.">
        <title>The status, quality, and expansion of the NIH full-length cDNA project: the Mammalian Gene Collection (MGC).</title>
        <authorList>
            <consortium name="The MGC Project Team"/>
        </authorList>
    </citation>
    <scope>NUCLEOTIDE SEQUENCE [LARGE SCALE MRNA]</scope>
    <source>
        <tissue>Prostate</tissue>
    </source>
</reference>
<reference key="4">
    <citation type="journal article" date="1994" name="J. Biol. Chem.">
        <title>Regulation of c-Fgr protein kinase by c-Src kinase (CSK) and by polycationic effectors.</title>
        <authorList>
            <person name="Ruzzene M."/>
            <person name="James P."/>
            <person name="Brunati A.M."/>
            <person name="Donella-Deana A."/>
            <person name="Pinna L.A."/>
        </authorList>
    </citation>
    <scope>PARTIAL PROTEIN SEQUENCE</scope>
    <scope>CATALYTIC ACTIVITY</scope>
    <scope>PHOSPHORYLATION AT TYR-400 AND TYR-511</scope>
    <scope>IDENTIFICATION BY MASS SPECTROMETRY</scope>
    <scope>ACTIVITY REGULATION</scope>
</reference>
<reference key="5">
    <citation type="journal article" date="1996" name="Biochemistry">
        <title>SH2 domains mediate the sequential phosphorylation of HS1 protein by p72syk and Src-related protein tyrosine kinases.</title>
        <authorList>
            <person name="Ruzzene M."/>
            <person name="Brunati A.M."/>
            <person name="Marin O."/>
            <person name="Donella-Deana A."/>
            <person name="Pinna L.A."/>
        </authorList>
    </citation>
    <scope>FUNCTION IN PHOSPHORYLATION OF HCLS1</scope>
</reference>
<reference key="6">
    <citation type="journal article" date="1997" name="Eur. J. Biochem.">
        <title>Specific stimulation of c-Fgr kinase by tyrosine-phosphorylated (poly)peptides--possible implication in the sequential mode of protein phosphorylation.</title>
        <authorList>
            <person name="Ruzzene M."/>
            <person name="Brunati A.M."/>
            <person name="Donella-Deana A."/>
            <person name="Marin O."/>
            <person name="Pinna L.A."/>
        </authorList>
    </citation>
    <scope>FUNCTION IN PHOSPHORYLATION OF HCLS1</scope>
    <scope>AUTOPHOSPHORYLATION</scope>
    <scope>ACTIVITY REGULATION</scope>
</reference>
<reference key="7">
    <citation type="journal article" date="1999" name="J. Biol. Chem.">
        <title>Molecular features underlying the sequential phosphorylation of HS1 protein and its association with c-Fgr protein-tyrosine kinase.</title>
        <authorList>
            <person name="Brunati A.M."/>
            <person name="Donella-Deana A."/>
            <person name="James P."/>
            <person name="Quadroni M."/>
            <person name="Contri A."/>
            <person name="Marin O."/>
            <person name="Pinna L.A."/>
        </authorList>
    </citation>
    <scope>CATALYTIC ACTIVITY</scope>
    <scope>FUNCTION IN PHOSPHORYLATION OF HCLS1</scope>
    <scope>INTERACTION WITH HCLS1</scope>
    <scope>AUTOPHOSPHORYLATION</scope>
</reference>
<reference key="8">
    <citation type="journal article" date="2004" name="Mol. Cell. Biol.">
        <title>Activation of RBL-2H3 mast cells is dependent on tyrosine phosphorylation of phospholipase D2 by Fyn and Fgr.</title>
        <authorList>
            <person name="Choi W.S."/>
            <person name="Hiragun T."/>
            <person name="Lee J.H."/>
            <person name="Kim Y.M."/>
            <person name="Kim H.P."/>
            <person name="Chahdi A."/>
            <person name="Her E."/>
            <person name="Han J.W."/>
            <person name="Beaven M.A."/>
        </authorList>
    </citation>
    <scope>FUNCTION IN PHOSPHORYLATION OF PLD2 AND MAST CELL ACTIVATION</scope>
    <scope>INTERACTION WITH PLD2</scope>
</reference>
<reference key="9">
    <citation type="journal article" date="2008" name="J. Cell. Biochem.">
        <title>Src-Tyrosine kinases are major agents in mitochondrial tyrosine phosphorylation.</title>
        <authorList>
            <person name="Tibaldi E."/>
            <person name="Brunati A.M."/>
            <person name="Massimino M.L."/>
            <person name="Stringaro A."/>
            <person name="Colone M."/>
            <person name="Agostinelli E."/>
            <person name="Arancia G."/>
            <person name="Toninello A."/>
        </authorList>
    </citation>
    <scope>SUBCELLULAR LOCATION</scope>
    <scope>TISSUE SPECIFICITY</scope>
</reference>
<reference key="10">
    <citation type="journal article" date="2011" name="J. Immunol.">
        <title>The Src family kinase Fgr is critical for activation of mast cells and IgE-mediated anaphylaxis in mice.</title>
        <authorList>
            <person name="Lee J.H."/>
            <person name="Kim J.W."/>
            <person name="Kim do K."/>
            <person name="Kim H.S."/>
            <person name="Park H.J."/>
            <person name="Park D.K."/>
            <person name="Kim A.R."/>
            <person name="Kim B."/>
            <person name="Beaven M.A."/>
            <person name="Park K.L."/>
            <person name="Kim Y.M."/>
            <person name="Choi W.S."/>
        </authorList>
    </citation>
    <scope>FUNCTION IN MAST CELL DEGRANULATION AND PHOSPHORYLATION OF SYK</scope>
    <scope>INTERACTION WITH MS4A2/FCER1B</scope>
    <scope>SUBCELLULAR LOCATION ON PLASMA MEMBRANE LIPID RAFTS</scope>
</reference>
<reference key="11">
    <citation type="journal article" date="2012" name="Nat. Commun.">
        <title>Quantitative maps of protein phosphorylation sites across 14 different rat organs and tissues.</title>
        <authorList>
            <person name="Lundby A."/>
            <person name="Secher A."/>
            <person name="Lage K."/>
            <person name="Nordsborg N.B."/>
            <person name="Dmytriyev A."/>
            <person name="Lundby C."/>
            <person name="Olsen J.V."/>
        </authorList>
    </citation>
    <scope>PHOSPHORYLATION [LARGE SCALE ANALYSIS] AT SER-50</scope>
    <scope>IDENTIFICATION BY MASS SPECTROMETRY [LARGE SCALE ANALYSIS]</scope>
</reference>
<gene>
    <name type="primary">Fgr</name>
</gene>
<sequence>MGCVFCKKLEPAPKEDVGLEGDFRSQGAEERYYPDPTQGRSSSISPQPISPAFLNVGNIRSVSGTGVTIFVALYDYEARTGDDLTFTKGEKFHILNNTEYDWWEARSLSSGRTGYVPSNYVAPVDSIQAEEWYFGKISRKDAERQLLSDGNPQGAFLIRESETTKGAYSLSIRDWDQNRGDHIKHYKIRKLDMGGYYITTRAQFESVQDLVRHYMEVNDGLCYLLTAPCMVMKPQTLGLAKDAWEIDRNSIALDRRLGTGCFGDVWLGTWNCSTKVAVKTLKPGTMSPKAFLEEAQIMKLLRHDKLVQLYAVVSEEPIYIVTEFMCYGSLLDFLKDRKGHNLMLPNLVDMAAQVAEGMAYMERMNYIHRDLRAANILVGEHLICKIADFGLARLIVDDEYNPQQGTKFPIKWTAPEAALFGRFTVKSDVWSFGILLTELITKGRVPYPGMNNREVLEQVEHGYHMPCPPGCPVSLYEVMEQTWRLDPEERPTFEYLQSFLEDYFTSTEPQYQPGDQT</sequence>
<comment type="function">
    <text evidence="1 3 9 10 12 14 15">Non-receptor tyrosine-protein kinase that transmits signals from cell surface receptors devoid of kinase activity and contributes to the regulation of immune responses, including neutrophil, monocyte, macrophage and mast cell functions, cytoskeleton remodeling in response to extracellular stimuli, phagocytosis, cell adhesion and migration. Promotes mast cell degranulation, release of inflammatory cytokines and IgE-mediated anaphylaxis. Acts downstream of receptors that bind the Fc region of immunoglobulins, such as MS4A2/FCER1B, FCER1G and FCGR2. Acts downstream of ITGB1 and ITGB2, and regulates actin cytoskeleton reorganization, cell spreading and adhesion. Depending on the context, activates or inhibits cellular responses. Functions as a negative regulator of ITGB2 signaling, phagocytosis and SYK activity in monocytes. Required for normal ITGB1 and ITGB2 signaling, normal cell spreading and adhesion in neutrophils and macrophages. Functions as a positive regulator of cell migration and regulates cytoskeleton reorganization via RAC1 activation. Phosphorylates SYK (in vitro) and promotes SYK-dependent activation of AKT1 and MAP kinase signaling. Phosphorylates PLD2 in antigen-stimulated mast cells, leading to PLD2 activation and the production of the signaling molecules lysophosphatidic acid and diacylglycerol. Promotes activation of PIK3R1. Phosphorylates FASLG, and thereby regulates its ubiquitination and subsequent internalization. Phosphorylates ABL1. Promotes phosphorylation of CBL, CTTN, PIK3R1, PTK2/FAK1, PTK2B/PYK2 and VAV2 (By similarity). Phosphorylates HCLS1 that has already been phosphorylated by SYK, but not unphosphorylated HCLS1. Together with CLNK, it acts as a negative regulator of natural killer cell-activating receptors and inhibits interferon-gamma production (By similarity).</text>
</comment>
<comment type="catalytic activity">
    <reaction evidence="7 9 13">
        <text>L-tyrosyl-[protein] + ATP = O-phospho-L-tyrosyl-[protein] + ADP + H(+)</text>
        <dbReference type="Rhea" id="RHEA:10596"/>
        <dbReference type="Rhea" id="RHEA-COMP:10136"/>
        <dbReference type="Rhea" id="RHEA-COMP:20101"/>
        <dbReference type="ChEBI" id="CHEBI:15378"/>
        <dbReference type="ChEBI" id="CHEBI:30616"/>
        <dbReference type="ChEBI" id="CHEBI:46858"/>
        <dbReference type="ChEBI" id="CHEBI:61978"/>
        <dbReference type="ChEBI" id="CHEBI:456216"/>
        <dbReference type="EC" id="2.7.10.2"/>
    </reaction>
</comment>
<comment type="activity regulation">
    <text evidence="13 15">Activated by autophosphorylation. Prior phosphorylation at Tyr-511 by SRC inhibits ulterior autophosphorylation at Tyr-400. Activated by phorbol myristate acetate, phosphatidic acid and poly-Lys. Binding (via SH2 domain) of HCLS1 that is already phosphorylated by SYK strongly increases kinase activity.</text>
</comment>
<comment type="subunit">
    <text evidence="1 3">Interacts with ITGB1, ITGB2, MS4A2/FCER1B and FCGR2. Interacts (via SH2 domain) with SYK (tyrosine phosphorylated). Interacts (via SH2 domain) with FLT3 (tyrosine phosphorylated). Interacts with PTK2/FAK1. Interacts (via SH2 domain) with HCLS1 (tyrosine phosphorylated by SYK). Interacts with SIRPA and PTPNS1. Interacts (not phosphorylated on tyrosine residues) with CBL; FGR tyrosine phosphorylation promotes dissociation (By similarity). Interacts with CLNK (By similarity).</text>
</comment>
<comment type="subcellular location">
    <subcellularLocation>
        <location evidence="16">Cell membrane</location>
        <topology evidence="16">Lipid-anchor</topology>
        <orientation evidence="16">Cytoplasmic side</orientation>
    </subcellularLocation>
    <subcellularLocation>
        <location>Cell membrane</location>
        <topology>Peripheral membrane protein</topology>
        <orientation>Cytoplasmic side</orientation>
    </subcellularLocation>
    <subcellularLocation>
        <location evidence="1">Cell projection</location>
        <location evidence="1">Ruffle membrane</location>
    </subcellularLocation>
    <subcellularLocation>
        <location evidence="1">Cytoplasm</location>
        <location evidence="1">Cytosol</location>
    </subcellularLocation>
    <subcellularLocation>
        <location evidence="1">Cytoplasm</location>
        <location evidence="1">Cytoskeleton</location>
    </subcellularLocation>
    <subcellularLocation>
        <location>Mitochondrion inner membrane</location>
    </subcellularLocation>
    <subcellularLocation>
        <location>Mitochondrion intermembrane space</location>
    </subcellularLocation>
    <text evidence="1">Colocalizes with actin fibers at membrane ruffles (By similarity). Detected at plasma membrane lipid rafts. Detected in mitochondrial intermembrane space and at inner membranes.</text>
</comment>
<comment type="tissue specificity">
    <text evidence="11">Detected in brain cortex (at protein level).</text>
</comment>
<comment type="PTM">
    <text evidence="1">Ubiquitinated. Becomes ubiquitinated in response to ITGB2 signaling; this does not lead to degradation (By similarity).</text>
</comment>
<comment type="PTM">
    <text evidence="1 13">Phosphorylated. Autophosphorylated on tyrosine residues. Becomes phosphorylated in response to FCGR2 engagement, cell adhesion and signaling by ITGB2 (By similarity). Prior phosphorylation at Tyr-511 by SRC inhibits ulterior autophosphorylation at Tyr-400.</text>
</comment>
<comment type="similarity">
    <text evidence="4">Belongs to the protein kinase superfamily. Tyr protein kinase family. SRC subfamily.</text>
</comment>
<dbReference type="EC" id="2.7.10.2"/>
<dbReference type="EMBL" id="X57018">
    <property type="protein sequence ID" value="CAA40337.1"/>
    <property type="molecule type" value="mRNA"/>
</dbReference>
<dbReference type="EMBL" id="CH473968">
    <property type="protein sequence ID" value="EDL80655.1"/>
    <property type="molecule type" value="Genomic_DNA"/>
</dbReference>
<dbReference type="EMBL" id="CH473968">
    <property type="protein sequence ID" value="EDL80656.1"/>
    <property type="molecule type" value="Genomic_DNA"/>
</dbReference>
<dbReference type="EMBL" id="CH473968">
    <property type="protein sequence ID" value="EDL80657.1"/>
    <property type="molecule type" value="Genomic_DNA"/>
</dbReference>
<dbReference type="EMBL" id="BC062025">
    <property type="protein sequence ID" value="AAH62025.1"/>
    <property type="molecule type" value="mRNA"/>
</dbReference>
<dbReference type="PIR" id="S24547">
    <property type="entry name" value="S24547"/>
</dbReference>
<dbReference type="RefSeq" id="NP_077059.2">
    <property type="nucleotide sequence ID" value="NM_024145.2"/>
</dbReference>
<dbReference type="RefSeq" id="XP_006239141.1">
    <property type="nucleotide sequence ID" value="XM_006239079.5"/>
</dbReference>
<dbReference type="RefSeq" id="XP_006239142.1">
    <property type="nucleotide sequence ID" value="XM_006239080.5"/>
</dbReference>
<dbReference type="RefSeq" id="XP_006239143.1">
    <property type="nucleotide sequence ID" value="XM_006239081.5"/>
</dbReference>
<dbReference type="RefSeq" id="XP_006239144.1">
    <property type="nucleotide sequence ID" value="XM_006239082.5"/>
</dbReference>
<dbReference type="RefSeq" id="XP_038966752.1">
    <property type="nucleotide sequence ID" value="XM_039110824.2"/>
</dbReference>
<dbReference type="RefSeq" id="XP_038966753.1">
    <property type="nucleotide sequence ID" value="XM_039110825.2"/>
</dbReference>
<dbReference type="RefSeq" id="XP_038966754.1">
    <property type="nucleotide sequence ID" value="XM_039110826.2"/>
</dbReference>
<dbReference type="RefSeq" id="XP_038966755.1">
    <property type="nucleotide sequence ID" value="XM_039110827.2"/>
</dbReference>
<dbReference type="RefSeq" id="XP_038966757.1">
    <property type="nucleotide sequence ID" value="XM_039110829.2"/>
</dbReference>
<dbReference type="RefSeq" id="XP_063144531.1">
    <property type="nucleotide sequence ID" value="XM_063288461.1"/>
</dbReference>
<dbReference type="SMR" id="Q6P6U0"/>
<dbReference type="BioGRID" id="249398">
    <property type="interactions" value="2"/>
</dbReference>
<dbReference type="FunCoup" id="Q6P6U0">
    <property type="interactions" value="194"/>
</dbReference>
<dbReference type="IntAct" id="Q6P6U0">
    <property type="interactions" value="2"/>
</dbReference>
<dbReference type="MINT" id="Q6P6U0"/>
<dbReference type="STRING" id="10116.ENSRNOP00000013779"/>
<dbReference type="BindingDB" id="Q6P6U0"/>
<dbReference type="ChEMBL" id="CHEMBL4362"/>
<dbReference type="GlyGen" id="Q6P6U0">
    <property type="glycosylation" value="1 site"/>
</dbReference>
<dbReference type="iPTMnet" id="Q6P6U0"/>
<dbReference type="PhosphoSitePlus" id="Q6P6U0"/>
<dbReference type="jPOST" id="Q6P6U0"/>
<dbReference type="PaxDb" id="10116-ENSRNOP00000013779"/>
<dbReference type="Ensembl" id="ENSRNOT00000013778.6">
    <property type="protein sequence ID" value="ENSRNOP00000013779.3"/>
    <property type="gene ID" value="ENSRNOG00000009912.6"/>
</dbReference>
<dbReference type="GeneID" id="79113"/>
<dbReference type="KEGG" id="rno:79113"/>
<dbReference type="UCSC" id="RGD:621319">
    <property type="organism name" value="rat"/>
</dbReference>
<dbReference type="AGR" id="RGD:621319"/>
<dbReference type="CTD" id="2268"/>
<dbReference type="RGD" id="621319">
    <property type="gene designation" value="Fgr"/>
</dbReference>
<dbReference type="eggNOG" id="KOG0197">
    <property type="taxonomic scope" value="Eukaryota"/>
</dbReference>
<dbReference type="GeneTree" id="ENSGT00940000157554"/>
<dbReference type="HOGENOM" id="CLU_000288_7_2_1"/>
<dbReference type="InParanoid" id="Q6P6U0"/>
<dbReference type="OMA" id="AQIPNYN"/>
<dbReference type="OrthoDB" id="4062651at2759"/>
<dbReference type="PhylomeDB" id="Q6P6U0"/>
<dbReference type="TreeFam" id="TF351634"/>
<dbReference type="Reactome" id="R-RNO-2029481">
    <property type="pathway name" value="FCGR activation"/>
</dbReference>
<dbReference type="Reactome" id="R-RNO-432142">
    <property type="pathway name" value="Platelet sensitization by LDL"/>
</dbReference>
<dbReference type="Reactome" id="R-RNO-6798695">
    <property type="pathway name" value="Neutrophil degranulation"/>
</dbReference>
<dbReference type="PRO" id="PR:Q6P6U0"/>
<dbReference type="Proteomes" id="UP000002494">
    <property type="component" value="Chromosome 5"/>
</dbReference>
<dbReference type="Proteomes" id="UP000234681">
    <property type="component" value="Chromosome 5"/>
</dbReference>
<dbReference type="Bgee" id="ENSRNOG00000009912">
    <property type="expression patterns" value="Expressed in spleen and 19 other cell types or tissues"/>
</dbReference>
<dbReference type="GO" id="GO:0015629">
    <property type="term" value="C:actin cytoskeleton"/>
    <property type="evidence" value="ECO:0000266"/>
    <property type="project" value="RGD"/>
</dbReference>
<dbReference type="GO" id="GO:0005856">
    <property type="term" value="C:cytoskeleton"/>
    <property type="evidence" value="ECO:0000266"/>
    <property type="project" value="RGD"/>
</dbReference>
<dbReference type="GO" id="GO:0005829">
    <property type="term" value="C:cytosol"/>
    <property type="evidence" value="ECO:0007669"/>
    <property type="project" value="UniProtKB-SubCell"/>
</dbReference>
<dbReference type="GO" id="GO:0005743">
    <property type="term" value="C:mitochondrial inner membrane"/>
    <property type="evidence" value="ECO:0007669"/>
    <property type="project" value="UniProtKB-SubCell"/>
</dbReference>
<dbReference type="GO" id="GO:0005758">
    <property type="term" value="C:mitochondrial intermembrane space"/>
    <property type="evidence" value="ECO:0007669"/>
    <property type="project" value="UniProtKB-SubCell"/>
</dbReference>
<dbReference type="GO" id="GO:0005886">
    <property type="term" value="C:plasma membrane"/>
    <property type="evidence" value="ECO:0000266"/>
    <property type="project" value="RGD"/>
</dbReference>
<dbReference type="GO" id="GO:0032587">
    <property type="term" value="C:ruffle membrane"/>
    <property type="evidence" value="ECO:0000266"/>
    <property type="project" value="RGD"/>
</dbReference>
<dbReference type="GO" id="GO:0005524">
    <property type="term" value="F:ATP binding"/>
    <property type="evidence" value="ECO:0007669"/>
    <property type="project" value="UniProtKB-KW"/>
</dbReference>
<dbReference type="GO" id="GO:0034988">
    <property type="term" value="F:Fc-gamma receptor I complex binding"/>
    <property type="evidence" value="ECO:0000266"/>
    <property type="project" value="RGD"/>
</dbReference>
<dbReference type="GO" id="GO:0034987">
    <property type="term" value="F:immunoglobulin receptor binding"/>
    <property type="evidence" value="ECO:0000250"/>
    <property type="project" value="UniProtKB"/>
</dbReference>
<dbReference type="GO" id="GO:0004715">
    <property type="term" value="F:non-membrane spanning protein tyrosine kinase activity"/>
    <property type="evidence" value="ECO:0000266"/>
    <property type="project" value="RGD"/>
</dbReference>
<dbReference type="GO" id="GO:0001784">
    <property type="term" value="F:phosphotyrosine residue binding"/>
    <property type="evidence" value="ECO:0000250"/>
    <property type="project" value="UniProtKB"/>
</dbReference>
<dbReference type="GO" id="GO:0019901">
    <property type="term" value="F:protein kinase binding"/>
    <property type="evidence" value="ECO:0000250"/>
    <property type="project" value="UniProtKB"/>
</dbReference>
<dbReference type="GO" id="GO:0004713">
    <property type="term" value="F:protein tyrosine kinase activity"/>
    <property type="evidence" value="ECO:0000314"/>
    <property type="project" value="RGD"/>
</dbReference>
<dbReference type="GO" id="GO:0005102">
    <property type="term" value="F:signaling receptor binding"/>
    <property type="evidence" value="ECO:0000318"/>
    <property type="project" value="GO_Central"/>
</dbReference>
<dbReference type="GO" id="GO:0030282">
    <property type="term" value="P:bone mineralization"/>
    <property type="evidence" value="ECO:0000266"/>
    <property type="project" value="RGD"/>
</dbReference>
<dbReference type="GO" id="GO:0030154">
    <property type="term" value="P:cell differentiation"/>
    <property type="evidence" value="ECO:0000318"/>
    <property type="project" value="GO_Central"/>
</dbReference>
<dbReference type="GO" id="GO:0007169">
    <property type="term" value="P:cell surface receptor protein tyrosine kinase signaling pathway"/>
    <property type="evidence" value="ECO:0000318"/>
    <property type="project" value="GO_Central"/>
</dbReference>
<dbReference type="GO" id="GO:0050830">
    <property type="term" value="P:defense response to Gram-positive bacterium"/>
    <property type="evidence" value="ECO:0000250"/>
    <property type="project" value="UniProtKB"/>
</dbReference>
<dbReference type="GO" id="GO:0045087">
    <property type="term" value="P:innate immune response"/>
    <property type="evidence" value="ECO:0007669"/>
    <property type="project" value="UniProtKB-KW"/>
</dbReference>
<dbReference type="GO" id="GO:0007229">
    <property type="term" value="P:integrin-mediated signaling pathway"/>
    <property type="evidence" value="ECO:0000250"/>
    <property type="project" value="UniProtKB"/>
</dbReference>
<dbReference type="GO" id="GO:0051450">
    <property type="term" value="P:myoblast proliferation"/>
    <property type="evidence" value="ECO:0000270"/>
    <property type="project" value="RGD"/>
</dbReference>
<dbReference type="GO" id="GO:0032815">
    <property type="term" value="P:negative regulation of natural killer cell activation"/>
    <property type="evidence" value="ECO:0000266"/>
    <property type="project" value="RGD"/>
</dbReference>
<dbReference type="GO" id="GO:0018108">
    <property type="term" value="P:peptidyl-tyrosine phosphorylation"/>
    <property type="evidence" value="ECO:0000250"/>
    <property type="project" value="UniProtKB"/>
</dbReference>
<dbReference type="GO" id="GO:0030335">
    <property type="term" value="P:positive regulation of cell migration"/>
    <property type="evidence" value="ECO:0000250"/>
    <property type="project" value="UniProtKB"/>
</dbReference>
<dbReference type="GO" id="GO:0001819">
    <property type="term" value="P:positive regulation of cytokine production"/>
    <property type="evidence" value="ECO:0000250"/>
    <property type="project" value="UniProtKB"/>
</dbReference>
<dbReference type="GO" id="GO:0043306">
    <property type="term" value="P:positive regulation of mast cell degranulation"/>
    <property type="evidence" value="ECO:0000250"/>
    <property type="project" value="UniProtKB"/>
</dbReference>
<dbReference type="GO" id="GO:0051897">
    <property type="term" value="P:positive regulation of phosphatidylinositol 3-kinase/protein kinase B signal transduction"/>
    <property type="evidence" value="ECO:0000266"/>
    <property type="project" value="RGD"/>
</dbReference>
<dbReference type="GO" id="GO:0008360">
    <property type="term" value="P:regulation of cell shape"/>
    <property type="evidence" value="ECO:0000250"/>
    <property type="project" value="UniProtKB"/>
</dbReference>
<dbReference type="GO" id="GO:0045088">
    <property type="term" value="P:regulation of innate immune response"/>
    <property type="evidence" value="ECO:0000250"/>
    <property type="project" value="UniProtKB"/>
</dbReference>
<dbReference type="GO" id="GO:0050764">
    <property type="term" value="P:regulation of phagocytosis"/>
    <property type="evidence" value="ECO:0000250"/>
    <property type="project" value="UniProtKB"/>
</dbReference>
<dbReference type="GO" id="GO:0045859">
    <property type="term" value="P:regulation of protein kinase activity"/>
    <property type="evidence" value="ECO:0000250"/>
    <property type="project" value="UniProtKB"/>
</dbReference>
<dbReference type="GO" id="GO:0048705">
    <property type="term" value="P:skeletal system morphogenesis"/>
    <property type="evidence" value="ECO:0000266"/>
    <property type="project" value="RGD"/>
</dbReference>
<dbReference type="CDD" id="cd10367">
    <property type="entry name" value="SH2_Src_Fgr"/>
    <property type="match status" value="1"/>
</dbReference>
<dbReference type="FunFam" id="1.10.510.10:FF:000553">
    <property type="entry name" value="Tyrosine-protein kinase"/>
    <property type="match status" value="1"/>
</dbReference>
<dbReference type="FunFam" id="2.30.30.40:FF:000022">
    <property type="entry name" value="Tyrosine-protein kinase"/>
    <property type="match status" value="1"/>
</dbReference>
<dbReference type="FunFam" id="3.30.200.20:FF:000016">
    <property type="entry name" value="Tyrosine-protein kinase"/>
    <property type="match status" value="1"/>
</dbReference>
<dbReference type="FunFam" id="3.30.505.10:FF:000001">
    <property type="entry name" value="Tyrosine-protein kinase"/>
    <property type="match status" value="1"/>
</dbReference>
<dbReference type="Gene3D" id="3.30.200.20">
    <property type="entry name" value="Phosphorylase Kinase, domain 1"/>
    <property type="match status" value="1"/>
</dbReference>
<dbReference type="Gene3D" id="3.30.505.10">
    <property type="entry name" value="SH2 domain"/>
    <property type="match status" value="1"/>
</dbReference>
<dbReference type="Gene3D" id="2.30.30.40">
    <property type="entry name" value="SH3 Domains"/>
    <property type="match status" value="1"/>
</dbReference>
<dbReference type="Gene3D" id="1.10.510.10">
    <property type="entry name" value="Transferase(Phosphotransferase) domain 1"/>
    <property type="match status" value="1"/>
</dbReference>
<dbReference type="InterPro" id="IPR035693">
    <property type="entry name" value="Fgr_SH2"/>
</dbReference>
<dbReference type="InterPro" id="IPR011009">
    <property type="entry name" value="Kinase-like_dom_sf"/>
</dbReference>
<dbReference type="InterPro" id="IPR050198">
    <property type="entry name" value="Non-receptor_tyrosine_kinases"/>
</dbReference>
<dbReference type="InterPro" id="IPR000719">
    <property type="entry name" value="Prot_kinase_dom"/>
</dbReference>
<dbReference type="InterPro" id="IPR017441">
    <property type="entry name" value="Protein_kinase_ATP_BS"/>
</dbReference>
<dbReference type="InterPro" id="IPR001245">
    <property type="entry name" value="Ser-Thr/Tyr_kinase_cat_dom"/>
</dbReference>
<dbReference type="InterPro" id="IPR000980">
    <property type="entry name" value="SH2"/>
</dbReference>
<dbReference type="InterPro" id="IPR036860">
    <property type="entry name" value="SH2_dom_sf"/>
</dbReference>
<dbReference type="InterPro" id="IPR036028">
    <property type="entry name" value="SH3-like_dom_sf"/>
</dbReference>
<dbReference type="InterPro" id="IPR001452">
    <property type="entry name" value="SH3_domain"/>
</dbReference>
<dbReference type="InterPro" id="IPR008266">
    <property type="entry name" value="Tyr_kinase_AS"/>
</dbReference>
<dbReference type="InterPro" id="IPR020635">
    <property type="entry name" value="Tyr_kinase_cat_dom"/>
</dbReference>
<dbReference type="PANTHER" id="PTHR24418">
    <property type="entry name" value="TYROSINE-PROTEIN KINASE"/>
    <property type="match status" value="1"/>
</dbReference>
<dbReference type="Pfam" id="PF07714">
    <property type="entry name" value="PK_Tyr_Ser-Thr"/>
    <property type="match status" value="1"/>
</dbReference>
<dbReference type="Pfam" id="PF00017">
    <property type="entry name" value="SH2"/>
    <property type="match status" value="1"/>
</dbReference>
<dbReference type="Pfam" id="PF00018">
    <property type="entry name" value="SH3_1"/>
    <property type="match status" value="1"/>
</dbReference>
<dbReference type="PRINTS" id="PR00401">
    <property type="entry name" value="SH2DOMAIN"/>
</dbReference>
<dbReference type="PRINTS" id="PR00452">
    <property type="entry name" value="SH3DOMAIN"/>
</dbReference>
<dbReference type="PRINTS" id="PR00109">
    <property type="entry name" value="TYRKINASE"/>
</dbReference>
<dbReference type="SMART" id="SM00252">
    <property type="entry name" value="SH2"/>
    <property type="match status" value="1"/>
</dbReference>
<dbReference type="SMART" id="SM00326">
    <property type="entry name" value="SH3"/>
    <property type="match status" value="1"/>
</dbReference>
<dbReference type="SMART" id="SM00219">
    <property type="entry name" value="TyrKc"/>
    <property type="match status" value="1"/>
</dbReference>
<dbReference type="SUPFAM" id="SSF56112">
    <property type="entry name" value="Protein kinase-like (PK-like)"/>
    <property type="match status" value="1"/>
</dbReference>
<dbReference type="SUPFAM" id="SSF55550">
    <property type="entry name" value="SH2 domain"/>
    <property type="match status" value="1"/>
</dbReference>
<dbReference type="SUPFAM" id="SSF50044">
    <property type="entry name" value="SH3-domain"/>
    <property type="match status" value="1"/>
</dbReference>
<dbReference type="PROSITE" id="PS00107">
    <property type="entry name" value="PROTEIN_KINASE_ATP"/>
    <property type="match status" value="1"/>
</dbReference>
<dbReference type="PROSITE" id="PS50011">
    <property type="entry name" value="PROTEIN_KINASE_DOM"/>
    <property type="match status" value="1"/>
</dbReference>
<dbReference type="PROSITE" id="PS00109">
    <property type="entry name" value="PROTEIN_KINASE_TYR"/>
    <property type="match status" value="1"/>
</dbReference>
<dbReference type="PROSITE" id="PS50001">
    <property type="entry name" value="SH2"/>
    <property type="match status" value="1"/>
</dbReference>
<dbReference type="PROSITE" id="PS50002">
    <property type="entry name" value="SH3"/>
    <property type="match status" value="1"/>
</dbReference>
<accession>Q6P6U0</accession>
<accession>Q63206</accession>
<name>FGR_RAT</name>
<proteinExistence type="evidence at protein level"/>
<protein>
    <recommendedName>
        <fullName>Tyrosine-protein kinase Fgr</fullName>
        <ecNumber>2.7.10.2</ecNumber>
    </recommendedName>
    <alternativeName>
        <fullName>Proto-oncogene c-Fgr</fullName>
    </alternativeName>
    <alternativeName>
        <fullName>p55-Fgr</fullName>
    </alternativeName>
</protein>